<evidence type="ECO:0000255" key="1">
    <source>
        <dbReference type="HAMAP-Rule" id="MF_01248"/>
    </source>
</evidence>
<evidence type="ECO:0000256" key="2">
    <source>
        <dbReference type="SAM" id="MobiDB-lite"/>
    </source>
</evidence>
<protein>
    <recommendedName>
        <fullName evidence="1">Glycogen debranching enzyme</fullName>
        <ecNumber evidence="1">3.2.1.196</ecNumber>
    </recommendedName>
    <alternativeName>
        <fullName evidence="1">Limit dextrin alpha-1,6-maltotetraose-hydrolase</fullName>
    </alternativeName>
</protein>
<organism>
    <name type="scientific">Pectobacterium atrosepticum (strain SCRI 1043 / ATCC BAA-672)</name>
    <name type="common">Erwinia carotovora subsp. atroseptica</name>
    <dbReference type="NCBI Taxonomy" id="218491"/>
    <lineage>
        <taxon>Bacteria</taxon>
        <taxon>Pseudomonadati</taxon>
        <taxon>Pseudomonadota</taxon>
        <taxon>Gammaproteobacteria</taxon>
        <taxon>Enterobacterales</taxon>
        <taxon>Pectobacteriaceae</taxon>
        <taxon>Pectobacterium</taxon>
    </lineage>
</organism>
<proteinExistence type="inferred from homology"/>
<gene>
    <name evidence="1" type="primary">glgX</name>
    <name type="ordered locus">ECA4150</name>
</gene>
<name>GLGX_PECAS</name>
<feature type="chain" id="PRO_1000165059" description="Glycogen debranching enzyme">
    <location>
        <begin position="1"/>
        <end position="658"/>
    </location>
</feature>
<feature type="region of interest" description="Disordered" evidence="2">
    <location>
        <begin position="457"/>
        <end position="481"/>
    </location>
</feature>
<feature type="compositionally biased region" description="Basic and acidic residues" evidence="2">
    <location>
        <begin position="457"/>
        <end position="468"/>
    </location>
</feature>
<feature type="active site" description="Nucleophile" evidence="1">
    <location>
        <position position="335"/>
    </location>
</feature>
<feature type="active site" description="Proton donor" evidence="1">
    <location>
        <position position="370"/>
    </location>
</feature>
<feature type="site" description="Transition state stabilizer" evidence="1">
    <location>
        <position position="442"/>
    </location>
</feature>
<comment type="function">
    <text evidence="1">Removes maltotriose and maltotetraose chains that are attached by 1,6-alpha-linkage to the limit dextrin main chain, generating a debranched limit dextrin.</text>
</comment>
<comment type="catalytic activity">
    <reaction evidence="1">
        <text>Hydrolysis of (1-&gt;6)-alpha-D-glucosidic linkages to branches with degrees of polymerization of three or four glucose residues in limit dextrin.</text>
        <dbReference type="EC" id="3.2.1.196"/>
    </reaction>
</comment>
<comment type="pathway">
    <text evidence="1">Glycan degradation; glycogen degradation.</text>
</comment>
<comment type="similarity">
    <text evidence="1">Belongs to the glycosyl hydrolase 13 family.</text>
</comment>
<reference key="1">
    <citation type="journal article" date="2004" name="Proc. Natl. Acad. Sci. U.S.A.">
        <title>Genome sequence of the enterobacterial phytopathogen Erwinia carotovora subsp. atroseptica and characterization of virulence factors.</title>
        <authorList>
            <person name="Bell K.S."/>
            <person name="Sebaihia M."/>
            <person name="Pritchard L."/>
            <person name="Holden M.T.G."/>
            <person name="Hyman L.J."/>
            <person name="Holeva M.C."/>
            <person name="Thomson N.R."/>
            <person name="Bentley S.D."/>
            <person name="Churcher L.J.C."/>
            <person name="Mungall K."/>
            <person name="Atkin R."/>
            <person name="Bason N."/>
            <person name="Brooks K."/>
            <person name="Chillingworth T."/>
            <person name="Clark K."/>
            <person name="Doggett J."/>
            <person name="Fraser A."/>
            <person name="Hance Z."/>
            <person name="Hauser H."/>
            <person name="Jagels K."/>
            <person name="Moule S."/>
            <person name="Norbertczak H."/>
            <person name="Ormond D."/>
            <person name="Price C."/>
            <person name="Quail M.A."/>
            <person name="Sanders M."/>
            <person name="Walker D."/>
            <person name="Whitehead S."/>
            <person name="Salmond G.P.C."/>
            <person name="Birch P.R.J."/>
            <person name="Parkhill J."/>
            <person name="Toth I.K."/>
        </authorList>
    </citation>
    <scope>NUCLEOTIDE SEQUENCE [LARGE SCALE GENOMIC DNA]</scope>
    <source>
        <strain>SCRI 1043 / ATCC BAA-672</strain>
    </source>
</reference>
<sequence>MAELQTGKPTPLGASFDGNGVNFALFSADAERVELCVFDERQQEQRIVLTARSGDIWHGYLPDAQPGLRYGFRVDGPFEPSQGLRFNPHKLLLDPCARQLDGWVVDDASLQGGIDQRDERDSAEIMAKCVVTAEDYDWQDDQHPQTPWNQTVIYEAHVRGLTQLHPDIPEDIRGSYAALGHPVMIDYLTSLGITALELLPVQQHADEPRLQQIGLRNYWGYNVLLPFAVDNSLAAGDDALNEFRDAVKALHNAGIEVILDVVFNHSAELDVEGPTLCQRGIDNRSYYWLGDSGEYHNWTGCGNVLRLNHPAVMDWVMDCLRFWREVCHVDGFRFDLATVLGRTPDFTAAAPLLSAMKNDNRLQGCKLIAEPWDIGHGGYQLGQFPTPFAEWSDRYRDDMRRFWLHGDISLGAFARRFAASSDIFQQRDRLPYASINKLTAHDGFTLRDLVSFNHKHNDANGEGNRDGTDSNFSNNHGTEGLEADDDIHQRRQASQKALLTTLILSQGTPMLLAGDELGHSQQGNNNAYCQDNELTWLHWDHADRGLREFVAGLIQLRRTIPALQQETWWQEGDGAVQWLNREGQPLTPPQWEQGEHQLQILLSGRWLVLVNASLHAGAFMLPEGHWQVSPPFDETNPPEGGMWHGQAQAVCVLIKQTA</sequence>
<keyword id="KW-0119">Carbohydrate metabolism</keyword>
<keyword id="KW-0321">Glycogen metabolism</keyword>
<keyword id="KW-0326">Glycosidase</keyword>
<keyword id="KW-0378">Hydrolase</keyword>
<keyword id="KW-1185">Reference proteome</keyword>
<accession>Q6CZK1</accession>
<dbReference type="EC" id="3.2.1.196" evidence="1"/>
<dbReference type="EMBL" id="BX950851">
    <property type="protein sequence ID" value="CAG77047.1"/>
    <property type="molecule type" value="Genomic_DNA"/>
</dbReference>
<dbReference type="RefSeq" id="WP_011095621.1">
    <property type="nucleotide sequence ID" value="NC_004547.2"/>
</dbReference>
<dbReference type="SMR" id="Q6CZK1"/>
<dbReference type="STRING" id="218491.ECA4150"/>
<dbReference type="CAZy" id="CBM48">
    <property type="family name" value="Carbohydrate-Binding Module Family 48"/>
</dbReference>
<dbReference type="CAZy" id="GH13">
    <property type="family name" value="Glycoside Hydrolase Family 13"/>
</dbReference>
<dbReference type="GeneID" id="57210813"/>
<dbReference type="KEGG" id="eca:ECA4150"/>
<dbReference type="PATRIC" id="fig|218491.5.peg.4223"/>
<dbReference type="eggNOG" id="COG1523">
    <property type="taxonomic scope" value="Bacteria"/>
</dbReference>
<dbReference type="HOGENOM" id="CLU_011725_1_1_6"/>
<dbReference type="OrthoDB" id="3236218at2"/>
<dbReference type="UniPathway" id="UPA00165"/>
<dbReference type="Proteomes" id="UP000007966">
    <property type="component" value="Chromosome"/>
</dbReference>
<dbReference type="GO" id="GO:0004133">
    <property type="term" value="F:glycogen debranching enzyme activity"/>
    <property type="evidence" value="ECO:0007669"/>
    <property type="project" value="UniProtKB-UniRule"/>
</dbReference>
<dbReference type="GO" id="GO:0004553">
    <property type="term" value="F:hydrolase activity, hydrolyzing O-glycosyl compounds"/>
    <property type="evidence" value="ECO:0007669"/>
    <property type="project" value="InterPro"/>
</dbReference>
<dbReference type="GO" id="GO:0005980">
    <property type="term" value="P:glycogen catabolic process"/>
    <property type="evidence" value="ECO:0007669"/>
    <property type="project" value="UniProtKB-UniRule"/>
</dbReference>
<dbReference type="CDD" id="cd11326">
    <property type="entry name" value="AmyAc_Glg_debranch"/>
    <property type="match status" value="1"/>
</dbReference>
<dbReference type="CDD" id="cd02856">
    <property type="entry name" value="E_set_GDE_Isoamylase_N"/>
    <property type="match status" value="1"/>
</dbReference>
<dbReference type="Gene3D" id="3.20.20.80">
    <property type="entry name" value="Glycosidases"/>
    <property type="match status" value="1"/>
</dbReference>
<dbReference type="Gene3D" id="2.60.40.1180">
    <property type="entry name" value="Golgi alpha-mannosidase II"/>
    <property type="match status" value="1"/>
</dbReference>
<dbReference type="Gene3D" id="2.60.40.10">
    <property type="entry name" value="Immunoglobulins"/>
    <property type="match status" value="1"/>
</dbReference>
<dbReference type="HAMAP" id="MF_01248">
    <property type="entry name" value="GlgX"/>
    <property type="match status" value="1"/>
</dbReference>
<dbReference type="InterPro" id="IPR040784">
    <property type="entry name" value="GlgX_C"/>
</dbReference>
<dbReference type="InterPro" id="IPR044505">
    <property type="entry name" value="GlgX_Isoamylase_N_E_set"/>
</dbReference>
<dbReference type="InterPro" id="IPR006047">
    <property type="entry name" value="Glyco_hydro_13_cat_dom"/>
</dbReference>
<dbReference type="InterPro" id="IPR004193">
    <property type="entry name" value="Glyco_hydro_13_N"/>
</dbReference>
<dbReference type="InterPro" id="IPR013780">
    <property type="entry name" value="Glyco_hydro_b"/>
</dbReference>
<dbReference type="InterPro" id="IPR022844">
    <property type="entry name" value="Glycogen_debranch_bac"/>
</dbReference>
<dbReference type="InterPro" id="IPR011837">
    <property type="entry name" value="Glycogen_debranch_GlgX"/>
</dbReference>
<dbReference type="InterPro" id="IPR017853">
    <property type="entry name" value="Glycoside_hydrolase_SF"/>
</dbReference>
<dbReference type="InterPro" id="IPR013783">
    <property type="entry name" value="Ig-like_fold"/>
</dbReference>
<dbReference type="InterPro" id="IPR014756">
    <property type="entry name" value="Ig_E-set"/>
</dbReference>
<dbReference type="NCBIfam" id="TIGR02100">
    <property type="entry name" value="glgX_debranch"/>
    <property type="match status" value="1"/>
</dbReference>
<dbReference type="NCBIfam" id="NF002983">
    <property type="entry name" value="PRK03705.1"/>
    <property type="match status" value="1"/>
</dbReference>
<dbReference type="PANTHER" id="PTHR43002">
    <property type="entry name" value="GLYCOGEN DEBRANCHING ENZYME"/>
    <property type="match status" value="1"/>
</dbReference>
<dbReference type="Pfam" id="PF00128">
    <property type="entry name" value="Alpha-amylase"/>
    <property type="match status" value="1"/>
</dbReference>
<dbReference type="Pfam" id="PF02922">
    <property type="entry name" value="CBM_48"/>
    <property type="match status" value="1"/>
</dbReference>
<dbReference type="Pfam" id="PF18390">
    <property type="entry name" value="GlgX_C"/>
    <property type="match status" value="1"/>
</dbReference>
<dbReference type="SMART" id="SM00642">
    <property type="entry name" value="Aamy"/>
    <property type="match status" value="1"/>
</dbReference>
<dbReference type="SUPFAM" id="SSF51445">
    <property type="entry name" value="(Trans)glycosidases"/>
    <property type="match status" value="1"/>
</dbReference>
<dbReference type="SUPFAM" id="SSF81296">
    <property type="entry name" value="E set domains"/>
    <property type="match status" value="1"/>
</dbReference>
<dbReference type="SUPFAM" id="SSF51011">
    <property type="entry name" value="Glycosyl hydrolase domain"/>
    <property type="match status" value="1"/>
</dbReference>